<name>MDH_XANP2</name>
<feature type="chain" id="PRO_1000126151" description="Malate dehydrogenase">
    <location>
        <begin position="1"/>
        <end position="321"/>
    </location>
</feature>
<feature type="active site" description="Proton acceptor" evidence="1">
    <location>
        <position position="176"/>
    </location>
</feature>
<feature type="binding site" evidence="1">
    <location>
        <begin position="10"/>
        <end position="15"/>
    </location>
    <ligand>
        <name>NAD(+)</name>
        <dbReference type="ChEBI" id="CHEBI:57540"/>
    </ligand>
</feature>
<feature type="binding site" evidence="1">
    <location>
        <position position="34"/>
    </location>
    <ligand>
        <name>NAD(+)</name>
        <dbReference type="ChEBI" id="CHEBI:57540"/>
    </ligand>
</feature>
<feature type="binding site" evidence="1">
    <location>
        <position position="83"/>
    </location>
    <ligand>
        <name>substrate</name>
    </ligand>
</feature>
<feature type="binding site" evidence="1">
    <location>
        <position position="89"/>
    </location>
    <ligand>
        <name>substrate</name>
    </ligand>
</feature>
<feature type="binding site" evidence="1">
    <location>
        <position position="96"/>
    </location>
    <ligand>
        <name>NAD(+)</name>
        <dbReference type="ChEBI" id="CHEBI:57540"/>
    </ligand>
</feature>
<feature type="binding site" evidence="1">
    <location>
        <begin position="119"/>
        <end position="121"/>
    </location>
    <ligand>
        <name>NAD(+)</name>
        <dbReference type="ChEBI" id="CHEBI:57540"/>
    </ligand>
</feature>
<feature type="binding site" evidence="1">
    <location>
        <position position="121"/>
    </location>
    <ligand>
        <name>substrate</name>
    </ligand>
</feature>
<feature type="binding site" evidence="1">
    <location>
        <position position="152"/>
    </location>
    <ligand>
        <name>substrate</name>
    </ligand>
</feature>
<organism>
    <name type="scientific">Xanthobacter autotrophicus (strain ATCC BAA-1158 / Py2)</name>
    <dbReference type="NCBI Taxonomy" id="78245"/>
    <lineage>
        <taxon>Bacteria</taxon>
        <taxon>Pseudomonadati</taxon>
        <taxon>Pseudomonadota</taxon>
        <taxon>Alphaproteobacteria</taxon>
        <taxon>Hyphomicrobiales</taxon>
        <taxon>Xanthobacteraceae</taxon>
        <taxon>Xanthobacter</taxon>
    </lineage>
</organism>
<sequence length="321" mass="33664">MARNKIALIGAGQIGGTLALLAGMKALGDIVLFDVAEGVPEGKALDLAELTPVEGFDAAYAGASSYDAISGADVVIVTAGVARKPGMSRDDLLAINLKVMEQVGAGIRKYAPDAFVICITNPLDAMVWALQRSSGLPPEKVVGMAGVLDSARLRYFLAEEFGVSVEDVTAFVMGGHGDTMVPLVRYSTVGGIPVPDLIRMGWTSEERIAAIVQRTRDGGAEIVNLLKSGSAFYAPAASAIAMAESYLRDKKRVLPVAALLDGEYGLRDIYVGVPAVIGARGVERIVEVELDRSERAMFDRSVAAVEGLVEACLKIAPGLGK</sequence>
<protein>
    <recommendedName>
        <fullName evidence="1">Malate dehydrogenase</fullName>
        <ecNumber evidence="1">1.1.1.37</ecNumber>
    </recommendedName>
</protein>
<dbReference type="EC" id="1.1.1.37" evidence="1"/>
<dbReference type="EMBL" id="CP000781">
    <property type="protein sequence ID" value="ABS65412.1"/>
    <property type="molecule type" value="Genomic_DNA"/>
</dbReference>
<dbReference type="SMR" id="A7IBL9"/>
<dbReference type="STRING" id="78245.Xaut_0153"/>
<dbReference type="KEGG" id="xau:Xaut_0153"/>
<dbReference type="eggNOG" id="COG0039">
    <property type="taxonomic scope" value="Bacteria"/>
</dbReference>
<dbReference type="HOGENOM" id="CLU_045401_2_1_5"/>
<dbReference type="OrthoDB" id="9802969at2"/>
<dbReference type="PhylomeDB" id="A7IBL9"/>
<dbReference type="Proteomes" id="UP000002417">
    <property type="component" value="Chromosome"/>
</dbReference>
<dbReference type="GO" id="GO:0004459">
    <property type="term" value="F:L-lactate dehydrogenase activity"/>
    <property type="evidence" value="ECO:0007669"/>
    <property type="project" value="TreeGrafter"/>
</dbReference>
<dbReference type="GO" id="GO:0030060">
    <property type="term" value="F:L-malate dehydrogenase (NAD+) activity"/>
    <property type="evidence" value="ECO:0007669"/>
    <property type="project" value="UniProtKB-UniRule"/>
</dbReference>
<dbReference type="GO" id="GO:0006089">
    <property type="term" value="P:lactate metabolic process"/>
    <property type="evidence" value="ECO:0007669"/>
    <property type="project" value="TreeGrafter"/>
</dbReference>
<dbReference type="GO" id="GO:0006099">
    <property type="term" value="P:tricarboxylic acid cycle"/>
    <property type="evidence" value="ECO:0007669"/>
    <property type="project" value="UniProtKB-UniRule"/>
</dbReference>
<dbReference type="CDD" id="cd01339">
    <property type="entry name" value="LDH-like_MDH"/>
    <property type="match status" value="1"/>
</dbReference>
<dbReference type="FunFam" id="3.40.50.720:FF:000018">
    <property type="entry name" value="Malate dehydrogenase"/>
    <property type="match status" value="1"/>
</dbReference>
<dbReference type="FunFam" id="3.90.110.10:FF:000004">
    <property type="entry name" value="Malate dehydrogenase"/>
    <property type="match status" value="1"/>
</dbReference>
<dbReference type="Gene3D" id="3.90.110.10">
    <property type="entry name" value="Lactate dehydrogenase/glycoside hydrolase, family 4, C-terminal"/>
    <property type="match status" value="1"/>
</dbReference>
<dbReference type="Gene3D" id="3.40.50.720">
    <property type="entry name" value="NAD(P)-binding Rossmann-like Domain"/>
    <property type="match status" value="1"/>
</dbReference>
<dbReference type="HAMAP" id="MF_00487">
    <property type="entry name" value="Malate_dehydrog_3"/>
    <property type="match status" value="1"/>
</dbReference>
<dbReference type="InterPro" id="IPR001557">
    <property type="entry name" value="L-lactate/malate_DH"/>
</dbReference>
<dbReference type="InterPro" id="IPR022383">
    <property type="entry name" value="Lactate/malate_DH_C"/>
</dbReference>
<dbReference type="InterPro" id="IPR001236">
    <property type="entry name" value="Lactate/malate_DH_N"/>
</dbReference>
<dbReference type="InterPro" id="IPR015955">
    <property type="entry name" value="Lactate_DH/Glyco_Ohase_4_C"/>
</dbReference>
<dbReference type="InterPro" id="IPR011275">
    <property type="entry name" value="Malate_DH_type3"/>
</dbReference>
<dbReference type="InterPro" id="IPR036291">
    <property type="entry name" value="NAD(P)-bd_dom_sf"/>
</dbReference>
<dbReference type="NCBIfam" id="TIGR01763">
    <property type="entry name" value="MalateDH_bact"/>
    <property type="match status" value="1"/>
</dbReference>
<dbReference type="NCBIfam" id="NF004863">
    <property type="entry name" value="PRK06223.1"/>
    <property type="match status" value="1"/>
</dbReference>
<dbReference type="PANTHER" id="PTHR43128">
    <property type="entry name" value="L-2-HYDROXYCARBOXYLATE DEHYDROGENASE (NAD(P)(+))"/>
    <property type="match status" value="1"/>
</dbReference>
<dbReference type="PANTHER" id="PTHR43128:SF16">
    <property type="entry name" value="L-LACTATE DEHYDROGENASE"/>
    <property type="match status" value="1"/>
</dbReference>
<dbReference type="Pfam" id="PF02866">
    <property type="entry name" value="Ldh_1_C"/>
    <property type="match status" value="1"/>
</dbReference>
<dbReference type="Pfam" id="PF00056">
    <property type="entry name" value="Ldh_1_N"/>
    <property type="match status" value="1"/>
</dbReference>
<dbReference type="PIRSF" id="PIRSF000102">
    <property type="entry name" value="Lac_mal_DH"/>
    <property type="match status" value="1"/>
</dbReference>
<dbReference type="PRINTS" id="PR00086">
    <property type="entry name" value="LLDHDRGNASE"/>
</dbReference>
<dbReference type="SUPFAM" id="SSF56327">
    <property type="entry name" value="LDH C-terminal domain-like"/>
    <property type="match status" value="1"/>
</dbReference>
<dbReference type="SUPFAM" id="SSF51735">
    <property type="entry name" value="NAD(P)-binding Rossmann-fold domains"/>
    <property type="match status" value="1"/>
</dbReference>
<gene>
    <name evidence="1" type="primary">mdh</name>
    <name type="ordered locus">Xaut_0153</name>
</gene>
<accession>A7IBL9</accession>
<comment type="function">
    <text evidence="1">Catalyzes the reversible oxidation of malate to oxaloacetate.</text>
</comment>
<comment type="catalytic activity">
    <reaction evidence="1">
        <text>(S)-malate + NAD(+) = oxaloacetate + NADH + H(+)</text>
        <dbReference type="Rhea" id="RHEA:21432"/>
        <dbReference type="ChEBI" id="CHEBI:15378"/>
        <dbReference type="ChEBI" id="CHEBI:15589"/>
        <dbReference type="ChEBI" id="CHEBI:16452"/>
        <dbReference type="ChEBI" id="CHEBI:57540"/>
        <dbReference type="ChEBI" id="CHEBI:57945"/>
        <dbReference type="EC" id="1.1.1.37"/>
    </reaction>
</comment>
<comment type="similarity">
    <text evidence="1">Belongs to the LDH/MDH superfamily. MDH type 3 family.</text>
</comment>
<keyword id="KW-0520">NAD</keyword>
<keyword id="KW-0560">Oxidoreductase</keyword>
<keyword id="KW-1185">Reference proteome</keyword>
<keyword id="KW-0816">Tricarboxylic acid cycle</keyword>
<evidence type="ECO:0000255" key="1">
    <source>
        <dbReference type="HAMAP-Rule" id="MF_00487"/>
    </source>
</evidence>
<reference key="1">
    <citation type="submission" date="2007-07" db="EMBL/GenBank/DDBJ databases">
        <title>Complete sequence of chromosome of Xanthobacter autotrophicus Py2.</title>
        <authorList>
            <consortium name="US DOE Joint Genome Institute"/>
            <person name="Copeland A."/>
            <person name="Lucas S."/>
            <person name="Lapidus A."/>
            <person name="Barry K."/>
            <person name="Glavina del Rio T."/>
            <person name="Hammon N."/>
            <person name="Israni S."/>
            <person name="Dalin E."/>
            <person name="Tice H."/>
            <person name="Pitluck S."/>
            <person name="Sims D."/>
            <person name="Brettin T."/>
            <person name="Bruce D."/>
            <person name="Detter J.C."/>
            <person name="Han C."/>
            <person name="Tapia R."/>
            <person name="Brainard J."/>
            <person name="Schmutz J."/>
            <person name="Larimer F."/>
            <person name="Land M."/>
            <person name="Hauser L."/>
            <person name="Kyrpides N."/>
            <person name="Kim E."/>
            <person name="Ensigns S.A."/>
            <person name="Richardson P."/>
        </authorList>
    </citation>
    <scope>NUCLEOTIDE SEQUENCE [LARGE SCALE GENOMIC DNA]</scope>
    <source>
        <strain>ATCC BAA-1158 / Py2</strain>
    </source>
</reference>
<proteinExistence type="inferred from homology"/>